<proteinExistence type="evidence at protein level"/>
<feature type="initiator methionine" description="Removed" evidence="6">
    <location>
        <position position="1"/>
    </location>
</feature>
<feature type="chain" id="PRO_0000212527" description="Mediator of RNA polymerase II transcription subunit 31">
    <location>
        <begin position="2"/>
        <end position="131"/>
    </location>
</feature>
<feature type="modified residue" description="N-acetylalanine" evidence="6">
    <location>
        <position position="2"/>
    </location>
</feature>
<feature type="helix" evidence="7">
    <location>
        <begin position="11"/>
        <end position="28"/>
    </location>
</feature>
<feature type="helix" evidence="7">
    <location>
        <begin position="31"/>
        <end position="39"/>
    </location>
</feature>
<feature type="strand" evidence="7">
    <location>
        <begin position="43"/>
        <end position="45"/>
    </location>
</feature>
<feature type="helix" evidence="7">
    <location>
        <begin position="46"/>
        <end position="54"/>
    </location>
</feature>
<feature type="helix" evidence="7">
    <location>
        <begin position="55"/>
        <end position="59"/>
    </location>
</feature>
<feature type="helix" evidence="7">
    <location>
        <begin position="61"/>
        <end position="64"/>
    </location>
</feature>
<feature type="helix" evidence="7">
    <location>
        <begin position="72"/>
        <end position="79"/>
    </location>
</feature>
<feature type="helix" evidence="7">
    <location>
        <begin position="83"/>
        <end position="86"/>
    </location>
</feature>
<feature type="helix" evidence="7">
    <location>
        <begin position="91"/>
        <end position="105"/>
    </location>
</feature>
<feature type="helix" evidence="7">
    <location>
        <begin position="107"/>
        <end position="121"/>
    </location>
</feature>
<reference key="1">
    <citation type="journal article" date="2000" name="Genome Res.">
        <title>Identification of novel human genes evolutionarily conserved in Caenorhabditis elegans by comparative proteomics.</title>
        <authorList>
            <person name="Lai C.-H."/>
            <person name="Chou C.-Y."/>
            <person name="Ch'ang L.-Y."/>
            <person name="Liu C.-S."/>
            <person name="Lin W.-C."/>
        </authorList>
    </citation>
    <scope>NUCLEOTIDE SEQUENCE [LARGE SCALE MRNA]</scope>
</reference>
<reference key="2">
    <citation type="journal article" date="2004" name="Nat. Genet.">
        <title>Complete sequencing and characterization of 21,243 full-length human cDNAs.</title>
        <authorList>
            <person name="Ota T."/>
            <person name="Suzuki Y."/>
            <person name="Nishikawa T."/>
            <person name="Otsuki T."/>
            <person name="Sugiyama T."/>
            <person name="Irie R."/>
            <person name="Wakamatsu A."/>
            <person name="Hayashi K."/>
            <person name="Sato H."/>
            <person name="Nagai K."/>
            <person name="Kimura K."/>
            <person name="Makita H."/>
            <person name="Sekine M."/>
            <person name="Obayashi M."/>
            <person name="Nishi T."/>
            <person name="Shibahara T."/>
            <person name="Tanaka T."/>
            <person name="Ishii S."/>
            <person name="Yamamoto J."/>
            <person name="Saito K."/>
            <person name="Kawai Y."/>
            <person name="Isono Y."/>
            <person name="Nakamura Y."/>
            <person name="Nagahari K."/>
            <person name="Murakami K."/>
            <person name="Yasuda T."/>
            <person name="Iwayanagi T."/>
            <person name="Wagatsuma M."/>
            <person name="Shiratori A."/>
            <person name="Sudo H."/>
            <person name="Hosoiri T."/>
            <person name="Kaku Y."/>
            <person name="Kodaira H."/>
            <person name="Kondo H."/>
            <person name="Sugawara M."/>
            <person name="Takahashi M."/>
            <person name="Kanda K."/>
            <person name="Yokoi T."/>
            <person name="Furuya T."/>
            <person name="Kikkawa E."/>
            <person name="Omura Y."/>
            <person name="Abe K."/>
            <person name="Kamihara K."/>
            <person name="Katsuta N."/>
            <person name="Sato K."/>
            <person name="Tanikawa M."/>
            <person name="Yamazaki M."/>
            <person name="Ninomiya K."/>
            <person name="Ishibashi T."/>
            <person name="Yamashita H."/>
            <person name="Murakawa K."/>
            <person name="Fujimori K."/>
            <person name="Tanai H."/>
            <person name="Kimata M."/>
            <person name="Watanabe M."/>
            <person name="Hiraoka S."/>
            <person name="Chiba Y."/>
            <person name="Ishida S."/>
            <person name="Ono Y."/>
            <person name="Takiguchi S."/>
            <person name="Watanabe S."/>
            <person name="Yosida M."/>
            <person name="Hotuta T."/>
            <person name="Kusano J."/>
            <person name="Kanehori K."/>
            <person name="Takahashi-Fujii A."/>
            <person name="Hara H."/>
            <person name="Tanase T.-O."/>
            <person name="Nomura Y."/>
            <person name="Togiya S."/>
            <person name="Komai F."/>
            <person name="Hara R."/>
            <person name="Takeuchi K."/>
            <person name="Arita M."/>
            <person name="Imose N."/>
            <person name="Musashino K."/>
            <person name="Yuuki H."/>
            <person name="Oshima A."/>
            <person name="Sasaki N."/>
            <person name="Aotsuka S."/>
            <person name="Yoshikawa Y."/>
            <person name="Matsunawa H."/>
            <person name="Ichihara T."/>
            <person name="Shiohata N."/>
            <person name="Sano S."/>
            <person name="Moriya S."/>
            <person name="Momiyama H."/>
            <person name="Satoh N."/>
            <person name="Takami S."/>
            <person name="Terashima Y."/>
            <person name="Suzuki O."/>
            <person name="Nakagawa S."/>
            <person name="Senoh A."/>
            <person name="Mizoguchi H."/>
            <person name="Goto Y."/>
            <person name="Shimizu F."/>
            <person name="Wakebe H."/>
            <person name="Hishigaki H."/>
            <person name="Watanabe T."/>
            <person name="Sugiyama A."/>
            <person name="Takemoto M."/>
            <person name="Kawakami B."/>
            <person name="Yamazaki M."/>
            <person name="Watanabe K."/>
            <person name="Kumagai A."/>
            <person name="Itakura S."/>
            <person name="Fukuzumi Y."/>
            <person name="Fujimori Y."/>
            <person name="Komiyama M."/>
            <person name="Tashiro H."/>
            <person name="Tanigami A."/>
            <person name="Fujiwara T."/>
            <person name="Ono T."/>
            <person name="Yamada K."/>
            <person name="Fujii Y."/>
            <person name="Ozaki K."/>
            <person name="Hirao M."/>
            <person name="Ohmori Y."/>
            <person name="Kawabata A."/>
            <person name="Hikiji T."/>
            <person name="Kobatake N."/>
            <person name="Inagaki H."/>
            <person name="Ikema Y."/>
            <person name="Okamoto S."/>
            <person name="Okitani R."/>
            <person name="Kawakami T."/>
            <person name="Noguchi S."/>
            <person name="Itoh T."/>
            <person name="Shigeta K."/>
            <person name="Senba T."/>
            <person name="Matsumura K."/>
            <person name="Nakajima Y."/>
            <person name="Mizuno T."/>
            <person name="Morinaga M."/>
            <person name="Sasaki M."/>
            <person name="Togashi T."/>
            <person name="Oyama M."/>
            <person name="Hata H."/>
            <person name="Watanabe M."/>
            <person name="Komatsu T."/>
            <person name="Mizushima-Sugano J."/>
            <person name="Satoh T."/>
            <person name="Shirai Y."/>
            <person name="Takahashi Y."/>
            <person name="Nakagawa K."/>
            <person name="Okumura K."/>
            <person name="Nagase T."/>
            <person name="Nomura N."/>
            <person name="Kikuchi H."/>
            <person name="Masuho Y."/>
            <person name="Yamashita R."/>
            <person name="Nakai K."/>
            <person name="Yada T."/>
            <person name="Nakamura Y."/>
            <person name="Ohara O."/>
            <person name="Isogai T."/>
            <person name="Sugano S."/>
        </authorList>
    </citation>
    <scope>NUCLEOTIDE SEQUENCE [LARGE SCALE MRNA]</scope>
</reference>
<reference key="3">
    <citation type="submission" date="2005-09" db="EMBL/GenBank/DDBJ databases">
        <authorList>
            <person name="Mural R.J."/>
            <person name="Istrail S."/>
            <person name="Sutton G.G."/>
            <person name="Florea L."/>
            <person name="Halpern A.L."/>
            <person name="Mobarry C.M."/>
            <person name="Lippert R."/>
            <person name="Walenz B."/>
            <person name="Shatkay H."/>
            <person name="Dew I."/>
            <person name="Miller J.R."/>
            <person name="Flanigan M.J."/>
            <person name="Edwards N.J."/>
            <person name="Bolanos R."/>
            <person name="Fasulo D."/>
            <person name="Halldorsson B.V."/>
            <person name="Hannenhalli S."/>
            <person name="Turner R."/>
            <person name="Yooseph S."/>
            <person name="Lu F."/>
            <person name="Nusskern D.R."/>
            <person name="Shue B.C."/>
            <person name="Zheng X.H."/>
            <person name="Zhong F."/>
            <person name="Delcher A.L."/>
            <person name="Huson D.H."/>
            <person name="Kravitz S.A."/>
            <person name="Mouchard L."/>
            <person name="Reinert K."/>
            <person name="Remington K.A."/>
            <person name="Clark A.G."/>
            <person name="Waterman M.S."/>
            <person name="Eichler E.E."/>
            <person name="Adams M.D."/>
            <person name="Hunkapiller M.W."/>
            <person name="Myers E.W."/>
            <person name="Venter J.C."/>
        </authorList>
    </citation>
    <scope>NUCLEOTIDE SEQUENCE [LARGE SCALE GENOMIC DNA]</scope>
</reference>
<reference key="4">
    <citation type="journal article" date="2004" name="Genome Res.">
        <title>The status, quality, and expansion of the NIH full-length cDNA project: the Mammalian Gene Collection (MGC).</title>
        <authorList>
            <consortium name="The MGC Project Team"/>
        </authorList>
    </citation>
    <scope>NUCLEOTIDE SEQUENCE [LARGE SCALE MRNA]</scope>
    <source>
        <tissue>Prostate</tissue>
    </source>
</reference>
<reference key="5">
    <citation type="journal article" date="1999" name="Mol. Cell">
        <title>A novel human SRB/MED-containing cofactor complex, SMCC, involved in transcription regulation.</title>
        <authorList>
            <person name="Gu W."/>
            <person name="Malik S."/>
            <person name="Ito M."/>
            <person name="Yuan C.-X."/>
            <person name="Fondell J.D."/>
            <person name="Zhang X."/>
            <person name="Martinez E."/>
            <person name="Qin J."/>
            <person name="Roeder R.G."/>
        </authorList>
    </citation>
    <scope>IDENTIFICATION BY MASS SPECTROMETRY</scope>
    <scope>IDENTIFICATION IN THE SMCC COMPLEX</scope>
</reference>
<reference key="6">
    <citation type="journal article" date="1999" name="Mol. Cell">
        <authorList>
            <person name="Gu W."/>
            <person name="Malik S."/>
            <person name="Ito M."/>
            <person name="Yuan C.-X."/>
            <person name="Fondell J.D."/>
            <person name="Zhang X."/>
            <person name="Martinez E."/>
            <person name="Qin J."/>
            <person name="Roeder R.G."/>
        </authorList>
    </citation>
    <scope>ERRATUM OF PUBMED:10024883</scope>
</reference>
<reference key="7">
    <citation type="journal article" date="2002" name="Proc. Natl. Acad. Sci. U.S.A.">
        <title>The TRAP/Mediator coactivator complex interacts directly with estrogen receptors alpha and beta through the TRAP220 subunit and directly enhances estrogen receptor function in vitro.</title>
        <authorList>
            <person name="Kang Y.K."/>
            <person name="Guermah M."/>
            <person name="Yuan C.-X."/>
            <person name="Roeder R.G."/>
        </authorList>
    </citation>
    <scope>IDENTIFICATION BY MASS SPECTROMETRY</scope>
    <scope>IDENTIFICATION IN THE MEDIATOR COMPLEX</scope>
    <scope>INTERACTION OF THE MEDIATOR COMPLEX WITH ESR1 AND ESR2</scope>
</reference>
<reference key="8">
    <citation type="journal article" date="2003" name="J. Biol. Chem.">
        <title>Identification of mammalian Mediator subunits with similarities to yeast Mediator subunits Srb5, Srb6, Med11, and Rox3.</title>
        <authorList>
            <person name="Sato S."/>
            <person name="Tomomori-Sato C."/>
            <person name="Banks C.A.S."/>
            <person name="Sorokina I."/>
            <person name="Parmely T.J."/>
            <person name="Kong S.E."/>
            <person name="Jin J."/>
            <person name="Cai Y."/>
            <person name="Lane W.S."/>
            <person name="Brower C.S."/>
            <person name="Conaway R.C."/>
            <person name="Conaway J.W."/>
        </authorList>
    </citation>
    <scope>INTERACTION WITH MED19</scope>
</reference>
<reference key="9">
    <citation type="journal article" date="2004" name="Mol. Cell">
        <title>A set of consensus mammalian mediator subunits identified by multidimensional protein identification technology.</title>
        <authorList>
            <person name="Sato S."/>
            <person name="Tomomori-Sato C."/>
            <person name="Parmely T.J."/>
            <person name="Florens L."/>
            <person name="Zybailov B."/>
            <person name="Swanson S.K."/>
            <person name="Banks C.A.S."/>
            <person name="Jin J."/>
            <person name="Cai Y."/>
            <person name="Washburn M.P."/>
            <person name="Conaway J.W."/>
            <person name="Conaway R.C."/>
        </authorList>
    </citation>
    <scope>IDENTIFICATION BY MASS SPECTROMETRY</scope>
    <scope>IDENTIFICATION IN THE MEDIATOR COMPLEX</scope>
</reference>
<reference key="10">
    <citation type="journal article" date="2005" name="Mol. Cell">
        <title>MED1/TRAP220 exists predominantly in a TRAP/Mediator subpopulation enriched in RNA polymerase II and is required for ER-mediated transcription.</title>
        <authorList>
            <person name="Zhang X."/>
            <person name="Krutchinsky A."/>
            <person name="Fukuda A."/>
            <person name="Chen W."/>
            <person name="Yamamura S."/>
            <person name="Chait B.T."/>
            <person name="Roeder R.G."/>
        </authorList>
    </citation>
    <scope>IDENTIFICATION BY MASS SPECTROMETRY</scope>
    <scope>IDENTIFICATION IN THE MEDIATOR COMPLEX</scope>
    <scope>ASSOCIATION OF THE MEDIATOR COMPLEX WITH RNA POLYMERASE II</scope>
</reference>
<reference key="11">
    <citation type="journal article" date="2008" name="Mol. Cell">
        <title>Kinase-selective enrichment enables quantitative phosphoproteomics of the kinome across the cell cycle.</title>
        <authorList>
            <person name="Daub H."/>
            <person name="Olsen J.V."/>
            <person name="Bairlein M."/>
            <person name="Gnad F."/>
            <person name="Oppermann F.S."/>
            <person name="Korner R."/>
            <person name="Greff Z."/>
            <person name="Keri G."/>
            <person name="Stemmann O."/>
            <person name="Mann M."/>
        </authorList>
    </citation>
    <scope>IDENTIFICATION BY MASS SPECTROMETRY [LARGE SCALE ANALYSIS]</scope>
    <source>
        <tissue>Cervix carcinoma</tissue>
    </source>
</reference>
<reference key="12">
    <citation type="journal article" date="2011" name="BMC Syst. Biol.">
        <title>Initial characterization of the human central proteome.</title>
        <authorList>
            <person name="Burkard T.R."/>
            <person name="Planyavsky M."/>
            <person name="Kaupe I."/>
            <person name="Breitwieser F.P."/>
            <person name="Buerckstuemmer T."/>
            <person name="Bennett K.L."/>
            <person name="Superti-Furga G."/>
            <person name="Colinge J."/>
        </authorList>
    </citation>
    <scope>IDENTIFICATION BY MASS SPECTROMETRY [LARGE SCALE ANALYSIS]</scope>
</reference>
<reference key="13">
    <citation type="journal article" date="2012" name="Proc. Natl. Acad. Sci. U.S.A.">
        <title>N-terminal acetylome analyses and functional insights of the N-terminal acetyltransferase NatB.</title>
        <authorList>
            <person name="Van Damme P."/>
            <person name="Lasa M."/>
            <person name="Polevoda B."/>
            <person name="Gazquez C."/>
            <person name="Elosegui-Artola A."/>
            <person name="Kim D.S."/>
            <person name="De Juan-Pardo E."/>
            <person name="Demeyer K."/>
            <person name="Hole K."/>
            <person name="Larrea E."/>
            <person name="Timmerman E."/>
            <person name="Prieto J."/>
            <person name="Arnesen T."/>
            <person name="Sherman F."/>
            <person name="Gevaert K."/>
            <person name="Aldabe R."/>
        </authorList>
    </citation>
    <scope>ACETYLATION [LARGE SCALE ANALYSIS] AT ALA-2</scope>
    <scope>CLEAVAGE OF INITIATOR METHIONINE [LARGE SCALE ANALYSIS]</scope>
    <scope>IDENTIFICATION BY MASS SPECTROMETRY [LARGE SCALE ANALYSIS]</scope>
</reference>
<comment type="function">
    <text>Component of the Mediator complex, a coactivator involved in the regulated transcription of nearly all RNA polymerase II-dependent genes. Mediator functions as a bridge to convey information from gene-specific regulatory proteins to the basal RNA polymerase II transcription machinery. Mediator is recruited to promoters by direct interactions with regulatory proteins and serves as a scaffold for the assembly of a functional preinitiation complex with RNA polymerase II and the general transcription factors.</text>
</comment>
<comment type="subunit">
    <text evidence="1 2 3 4">Component of the Mediator complex, which is composed of MED1, MED4, MED6, MED7, MED8, MED9, MED10, MED11, MED12, MED13, MED13L, MED14, MED15, MED16, MED17, MED18, MED19, MED20, MED21, MED22, MED23, MED24, MED25, MED26, MED27, MED29, MED30, MED31, CCNC, CDK8 and CDC2L6/CDK11. The MED12, MED13, CCNC and CDK8 subunits form a distinct module termed the CDK8 module. Mediator containing the CDK8 module is less active than Mediator lacking this module in supporting transcriptional activation. Individual preparations of the Mediator complex lacking one or more distinct subunits have been variously termed ARC, CRSP, DRIP, PC2, SMCC and TRAP.</text>
</comment>
<comment type="interaction">
    <interactant intactId="EBI-394707">
        <id>Q9Y3C7</id>
    </interactant>
    <interactant intactId="EBI-448202">
        <id>O95257</id>
        <label>GADD45G</label>
    </interactant>
    <organismsDiffer>false</organismsDiffer>
    <experiments>2</experiments>
</comment>
<comment type="interaction">
    <interactant intactId="EBI-394707">
        <id>Q9Y3C7</id>
    </interactant>
    <interactant intactId="EBI-466029">
        <id>P42858</id>
        <label>HTT</label>
    </interactant>
    <organismsDiffer>false</organismsDiffer>
    <experiments>9</experiments>
</comment>
<comment type="interaction">
    <interactant intactId="EBI-394707">
        <id>Q9Y3C7</id>
    </interactant>
    <interactant intactId="EBI-394632">
        <id>O43513</id>
        <label>MED7</label>
    </interactant>
    <organismsDiffer>false</organismsDiffer>
    <experiments>6</experiments>
</comment>
<comment type="interaction">
    <interactant intactId="EBI-394707">
        <id>Q9Y3C7</id>
    </interactant>
    <interactant intactId="EBI-2515597">
        <id>Q96HR8</id>
        <label>NAF1</label>
    </interactant>
    <organismsDiffer>false</organismsDiffer>
    <experiments>3</experiments>
</comment>
<comment type="subcellular location">
    <subcellularLocation>
        <location evidence="5">Nucleus</location>
    </subcellularLocation>
</comment>
<comment type="similarity">
    <text evidence="5">Belongs to the Mediator complex subunit 31 family.</text>
</comment>
<accession>Q9Y3C7</accession>
<accession>B2R4L9</accession>
<keyword id="KW-0002">3D-structure</keyword>
<keyword id="KW-0007">Acetylation</keyword>
<keyword id="KW-0010">Activator</keyword>
<keyword id="KW-0539">Nucleus</keyword>
<keyword id="KW-1267">Proteomics identification</keyword>
<keyword id="KW-1185">Reference proteome</keyword>
<keyword id="KW-0804">Transcription</keyword>
<keyword id="KW-0805">Transcription regulation</keyword>
<name>MED31_HUMAN</name>
<gene>
    <name type="primary">MED31</name>
    <name type="synonym">SOH1</name>
    <name type="ORF">CGI-125</name>
</gene>
<evidence type="ECO:0000269" key="1">
    <source>
    </source>
</evidence>
<evidence type="ECO:0000269" key="2">
    <source>
    </source>
</evidence>
<evidence type="ECO:0000269" key="3">
    <source>
    </source>
</evidence>
<evidence type="ECO:0000269" key="4">
    <source>
    </source>
</evidence>
<evidence type="ECO:0000305" key="5"/>
<evidence type="ECO:0007744" key="6">
    <source>
    </source>
</evidence>
<evidence type="ECO:0007829" key="7">
    <source>
        <dbReference type="PDB" id="7EMF"/>
    </source>
</evidence>
<protein>
    <recommendedName>
        <fullName>Mediator of RNA polymerase II transcription subunit 31</fullName>
    </recommendedName>
    <alternativeName>
        <fullName>Mediator complex subunit 31</fullName>
    </alternativeName>
    <alternativeName>
        <fullName>Mediator complex subunit SOH1</fullName>
        <shortName>hSOH1</shortName>
    </alternativeName>
</protein>
<organism>
    <name type="scientific">Homo sapiens</name>
    <name type="common">Human</name>
    <dbReference type="NCBI Taxonomy" id="9606"/>
    <lineage>
        <taxon>Eukaryota</taxon>
        <taxon>Metazoa</taxon>
        <taxon>Chordata</taxon>
        <taxon>Craniata</taxon>
        <taxon>Vertebrata</taxon>
        <taxon>Euteleostomi</taxon>
        <taxon>Mammalia</taxon>
        <taxon>Eutheria</taxon>
        <taxon>Euarchontoglires</taxon>
        <taxon>Primates</taxon>
        <taxon>Haplorrhini</taxon>
        <taxon>Catarrhini</taxon>
        <taxon>Hominidae</taxon>
        <taxon>Homo</taxon>
    </lineage>
</organism>
<sequence>MAAAVAMETDDAGNRLRFQLELEFVQCLANPNYLNFLAQRGYFKDKAFVNYLKYLLYWKDPEYAKYLKYPQCLHMLELLQYEHFRKELVNAQCAKFIDEQQILHWQHYSRKRMRLQQALAEQQQQNNTSGK</sequence>
<dbReference type="EMBL" id="AF151883">
    <property type="protein sequence ID" value="AAD34120.1"/>
    <property type="molecule type" value="mRNA"/>
</dbReference>
<dbReference type="EMBL" id="AK311875">
    <property type="protein sequence ID" value="BAG34816.1"/>
    <property type="molecule type" value="mRNA"/>
</dbReference>
<dbReference type="EMBL" id="CH471108">
    <property type="protein sequence ID" value="EAW90301.1"/>
    <property type="molecule type" value="Genomic_DNA"/>
</dbReference>
<dbReference type="EMBL" id="BC012539">
    <property type="protein sequence ID" value="AAH12539.1"/>
    <property type="molecule type" value="mRNA"/>
</dbReference>
<dbReference type="CCDS" id="CCDS11078.1"/>
<dbReference type="RefSeq" id="NP_057144.1">
    <property type="nucleotide sequence ID" value="NM_016060.3"/>
</dbReference>
<dbReference type="PDB" id="7EMF">
    <property type="method" value="EM"/>
    <property type="resolution" value="3.50 A"/>
    <property type="chains" value="4=1-131"/>
</dbReference>
<dbReference type="PDB" id="7ENA">
    <property type="method" value="EM"/>
    <property type="resolution" value="4.07 A"/>
    <property type="chains" value="m=1-131"/>
</dbReference>
<dbReference type="PDB" id="7ENC">
    <property type="method" value="EM"/>
    <property type="resolution" value="4.13 A"/>
    <property type="chains" value="m=1-131"/>
</dbReference>
<dbReference type="PDB" id="7ENJ">
    <property type="method" value="EM"/>
    <property type="resolution" value="4.40 A"/>
    <property type="chains" value="4=1-131"/>
</dbReference>
<dbReference type="PDB" id="7LBM">
    <property type="method" value="EM"/>
    <property type="resolution" value="4.80 A"/>
    <property type="chains" value="y=1-131"/>
</dbReference>
<dbReference type="PDB" id="7NVR">
    <property type="method" value="EM"/>
    <property type="resolution" value="4.50 A"/>
    <property type="chains" value="o=1-131"/>
</dbReference>
<dbReference type="PDB" id="8GXQ">
    <property type="method" value="EM"/>
    <property type="resolution" value="5.04 A"/>
    <property type="chains" value="m=1-131"/>
</dbReference>
<dbReference type="PDB" id="8GXS">
    <property type="method" value="EM"/>
    <property type="resolution" value="4.16 A"/>
    <property type="chains" value="m=1-131"/>
</dbReference>
<dbReference type="PDB" id="8T9D">
    <property type="method" value="EM"/>
    <property type="resolution" value="4.66 A"/>
    <property type="chains" value="Z=1-131"/>
</dbReference>
<dbReference type="PDB" id="8TQW">
    <property type="method" value="EM"/>
    <property type="resolution" value="8.20 A"/>
    <property type="chains" value="4=1-131"/>
</dbReference>
<dbReference type="PDB" id="8TRH">
    <property type="method" value="EM"/>
    <property type="resolution" value="3.70 A"/>
    <property type="chains" value="4=1-131"/>
</dbReference>
<dbReference type="PDBsum" id="7EMF"/>
<dbReference type="PDBsum" id="7ENA"/>
<dbReference type="PDBsum" id="7ENC"/>
<dbReference type="PDBsum" id="7ENJ"/>
<dbReference type="PDBsum" id="7LBM"/>
<dbReference type="PDBsum" id="7NVR"/>
<dbReference type="PDBsum" id="8GXQ"/>
<dbReference type="PDBsum" id="8GXS"/>
<dbReference type="PDBsum" id="8T9D"/>
<dbReference type="PDBsum" id="8TQW"/>
<dbReference type="PDBsum" id="8TRH"/>
<dbReference type="EMDB" id="EMD-12610"/>
<dbReference type="EMDB" id="EMD-23255"/>
<dbReference type="EMDB" id="EMD-31191"/>
<dbReference type="EMDB" id="EMD-31204"/>
<dbReference type="EMDB" id="EMD-31207"/>
<dbReference type="EMDB" id="EMD-31211"/>
<dbReference type="EMDB" id="EMD-34359"/>
<dbReference type="EMDB" id="EMD-34360"/>
<dbReference type="EMDB" id="EMD-41107"/>
<dbReference type="EMDB" id="EMD-41565"/>
<dbReference type="EMDB" id="EMD-41580"/>
<dbReference type="SMR" id="Q9Y3C7"/>
<dbReference type="BioGRID" id="119211">
    <property type="interactions" value="124"/>
</dbReference>
<dbReference type="ComplexPortal" id="CPX-3227">
    <property type="entry name" value="Core mediator complex"/>
</dbReference>
<dbReference type="CORUM" id="Q9Y3C7"/>
<dbReference type="FunCoup" id="Q9Y3C7">
    <property type="interactions" value="3005"/>
</dbReference>
<dbReference type="IntAct" id="Q9Y3C7">
    <property type="interactions" value="118"/>
</dbReference>
<dbReference type="MINT" id="Q9Y3C7"/>
<dbReference type="STRING" id="9606.ENSP00000225728"/>
<dbReference type="GlyGen" id="Q9Y3C7">
    <property type="glycosylation" value="1 site, 1 O-linked glycan (1 site)"/>
</dbReference>
<dbReference type="iPTMnet" id="Q9Y3C7"/>
<dbReference type="PhosphoSitePlus" id="Q9Y3C7"/>
<dbReference type="SwissPalm" id="Q9Y3C7"/>
<dbReference type="BioMuta" id="MED31"/>
<dbReference type="DMDM" id="38258656"/>
<dbReference type="jPOST" id="Q9Y3C7"/>
<dbReference type="MassIVE" id="Q9Y3C7"/>
<dbReference type="PaxDb" id="9606-ENSP00000225728"/>
<dbReference type="PeptideAtlas" id="Q9Y3C7"/>
<dbReference type="ProteomicsDB" id="86016"/>
<dbReference type="Pumba" id="Q9Y3C7"/>
<dbReference type="Antibodypedia" id="23820">
    <property type="antibodies" value="112 antibodies from 25 providers"/>
</dbReference>
<dbReference type="DNASU" id="51003"/>
<dbReference type="Ensembl" id="ENST00000225728.8">
    <property type="protein sequence ID" value="ENSP00000225728.3"/>
    <property type="gene ID" value="ENSG00000108590.11"/>
</dbReference>
<dbReference type="GeneID" id="51003"/>
<dbReference type="KEGG" id="hsa:51003"/>
<dbReference type="MANE-Select" id="ENST00000225728.8">
    <property type="protein sequence ID" value="ENSP00000225728.3"/>
    <property type="RefSeq nucleotide sequence ID" value="NM_016060.3"/>
    <property type="RefSeq protein sequence ID" value="NP_057144.1"/>
</dbReference>
<dbReference type="UCSC" id="uc002gdg.5">
    <property type="organism name" value="human"/>
</dbReference>
<dbReference type="AGR" id="HGNC:24260"/>
<dbReference type="CTD" id="51003"/>
<dbReference type="DisGeNET" id="51003"/>
<dbReference type="GeneCards" id="MED31"/>
<dbReference type="HGNC" id="HGNC:24260">
    <property type="gene designation" value="MED31"/>
</dbReference>
<dbReference type="HPA" id="ENSG00000108590">
    <property type="expression patterns" value="Low tissue specificity"/>
</dbReference>
<dbReference type="MIM" id="620492">
    <property type="type" value="gene"/>
</dbReference>
<dbReference type="neXtProt" id="NX_Q9Y3C7"/>
<dbReference type="OpenTargets" id="ENSG00000108590"/>
<dbReference type="PharmGKB" id="PA134884310"/>
<dbReference type="VEuPathDB" id="HostDB:ENSG00000108590"/>
<dbReference type="eggNOG" id="KOG4086">
    <property type="taxonomic scope" value="Eukaryota"/>
</dbReference>
<dbReference type="GeneTree" id="ENSGT00390000015531"/>
<dbReference type="HOGENOM" id="CLU_071681_5_1_1"/>
<dbReference type="InParanoid" id="Q9Y3C7"/>
<dbReference type="OMA" id="QGILNQP"/>
<dbReference type="OrthoDB" id="10257739at2759"/>
<dbReference type="PAN-GO" id="Q9Y3C7">
    <property type="GO annotations" value="3 GO annotations based on evolutionary models"/>
</dbReference>
<dbReference type="PhylomeDB" id="Q9Y3C7"/>
<dbReference type="TreeFam" id="TF105799"/>
<dbReference type="PathwayCommons" id="Q9Y3C7"/>
<dbReference type="Reactome" id="R-HSA-1989781">
    <property type="pathway name" value="PPARA activates gene expression"/>
</dbReference>
<dbReference type="Reactome" id="R-HSA-212436">
    <property type="pathway name" value="Generic Transcription Pathway"/>
</dbReference>
<dbReference type="Reactome" id="R-HSA-381340">
    <property type="pathway name" value="Transcriptional regulation of white adipocyte differentiation"/>
</dbReference>
<dbReference type="Reactome" id="R-HSA-9833110">
    <property type="pathway name" value="RSV-host interactions"/>
</dbReference>
<dbReference type="Reactome" id="R-HSA-9841922">
    <property type="pathway name" value="MLL4 and MLL3 complexes regulate expression of PPARG target genes in adipogenesis and hepatic steatosis"/>
</dbReference>
<dbReference type="SignaLink" id="Q9Y3C7"/>
<dbReference type="SIGNOR" id="Q9Y3C7"/>
<dbReference type="BioGRID-ORCS" id="51003">
    <property type="hits" value="531 hits in 1165 CRISPR screens"/>
</dbReference>
<dbReference type="ChiTaRS" id="MED31">
    <property type="organism name" value="human"/>
</dbReference>
<dbReference type="GeneWiki" id="MED31"/>
<dbReference type="GenomeRNAi" id="51003"/>
<dbReference type="Pharos" id="Q9Y3C7">
    <property type="development level" value="Tbio"/>
</dbReference>
<dbReference type="PRO" id="PR:Q9Y3C7"/>
<dbReference type="Proteomes" id="UP000005640">
    <property type="component" value="Chromosome 17"/>
</dbReference>
<dbReference type="RNAct" id="Q9Y3C7">
    <property type="molecule type" value="protein"/>
</dbReference>
<dbReference type="Bgee" id="ENSG00000108590">
    <property type="expression patterns" value="Expressed in lower esophagus mucosa and 166 other cell types or tissues"/>
</dbReference>
<dbReference type="ExpressionAtlas" id="Q9Y3C7">
    <property type="expression patterns" value="baseline and differential"/>
</dbReference>
<dbReference type="GO" id="GO:0070847">
    <property type="term" value="C:core mediator complex"/>
    <property type="evidence" value="ECO:0000353"/>
    <property type="project" value="ComplexPortal"/>
</dbReference>
<dbReference type="GO" id="GO:0016592">
    <property type="term" value="C:mediator complex"/>
    <property type="evidence" value="ECO:0000318"/>
    <property type="project" value="GO_Central"/>
</dbReference>
<dbReference type="GO" id="GO:0005654">
    <property type="term" value="C:nucleoplasm"/>
    <property type="evidence" value="ECO:0000304"/>
    <property type="project" value="Reactome"/>
</dbReference>
<dbReference type="GO" id="GO:0005634">
    <property type="term" value="C:nucleus"/>
    <property type="evidence" value="ECO:0000314"/>
    <property type="project" value="ComplexPortal"/>
</dbReference>
<dbReference type="GO" id="GO:0000151">
    <property type="term" value="C:ubiquitin ligase complex"/>
    <property type="evidence" value="ECO:0007669"/>
    <property type="project" value="Ensembl"/>
</dbReference>
<dbReference type="GO" id="GO:0003712">
    <property type="term" value="F:transcription coregulator activity"/>
    <property type="evidence" value="ECO:0007669"/>
    <property type="project" value="InterPro"/>
</dbReference>
<dbReference type="GO" id="GO:0061630">
    <property type="term" value="F:ubiquitin protein ligase activity"/>
    <property type="evidence" value="ECO:0007669"/>
    <property type="project" value="Ensembl"/>
</dbReference>
<dbReference type="GO" id="GO:0060173">
    <property type="term" value="P:limb development"/>
    <property type="evidence" value="ECO:0007669"/>
    <property type="project" value="Ensembl"/>
</dbReference>
<dbReference type="GO" id="GO:0048147">
    <property type="term" value="P:negative regulation of fibroblast proliferation"/>
    <property type="evidence" value="ECO:0007669"/>
    <property type="project" value="Ensembl"/>
</dbReference>
<dbReference type="GO" id="GO:0032968">
    <property type="term" value="P:positive regulation of transcription elongation by RNA polymerase II"/>
    <property type="evidence" value="ECO:0000303"/>
    <property type="project" value="ComplexPortal"/>
</dbReference>
<dbReference type="GO" id="GO:0060261">
    <property type="term" value="P:positive regulation of transcription initiation by RNA polymerase II"/>
    <property type="evidence" value="ECO:0000303"/>
    <property type="project" value="ComplexPortal"/>
</dbReference>
<dbReference type="GO" id="GO:0016567">
    <property type="term" value="P:protein ubiquitination"/>
    <property type="evidence" value="ECO:0007669"/>
    <property type="project" value="Ensembl"/>
</dbReference>
<dbReference type="GO" id="GO:0006357">
    <property type="term" value="P:regulation of transcription by RNA polymerase II"/>
    <property type="evidence" value="ECO:0000318"/>
    <property type="project" value="GO_Central"/>
</dbReference>
<dbReference type="GO" id="GO:0051123">
    <property type="term" value="P:RNA polymerase II preinitiation complex assembly"/>
    <property type="evidence" value="ECO:0000303"/>
    <property type="project" value="ComplexPortal"/>
</dbReference>
<dbReference type="FunFam" id="1.10.10.1340:FF:000001">
    <property type="entry name" value="Mediator of RNA polymerase II transcription subunit 31"/>
    <property type="match status" value="1"/>
</dbReference>
<dbReference type="Gene3D" id="1.10.10.1340">
    <property type="entry name" value="Mediator of RNA polymerase II, submodule Med31 (Soh1)"/>
    <property type="match status" value="1"/>
</dbReference>
<dbReference type="InterPro" id="IPR038089">
    <property type="entry name" value="Med31_sf"/>
</dbReference>
<dbReference type="InterPro" id="IPR008831">
    <property type="entry name" value="Mediator_Med31"/>
</dbReference>
<dbReference type="PANTHER" id="PTHR13186">
    <property type="entry name" value="MEDIATOR OF RNA POLYMERASE II TRANSCRIPTION SUBUNIT 31"/>
    <property type="match status" value="1"/>
</dbReference>
<dbReference type="Pfam" id="PF05669">
    <property type="entry name" value="Med31"/>
    <property type="match status" value="1"/>
</dbReference>